<protein>
    <recommendedName>
        <fullName>Beta-fibrinogenase jerdofibrase</fullName>
        <ecNumber>3.4.21.-</ecNumber>
    </recommendedName>
    <alternativeName>
        <fullName>Snake venom serine protease</fullName>
        <shortName>SVSP</shortName>
    </alternativeName>
</protein>
<reference key="1">
    <citation type="journal article" date="2001" name="Toxicon">
        <title>Purification and characterization of jerdofibrase, a serine protease from the venom of Trimeresurus jerdonii snake.</title>
        <authorList>
            <person name="Jin Y."/>
            <person name="Lu Q.M."/>
            <person name="Wei J.F."/>
            <person name="Li D.S."/>
            <person name="Wang W.Y."/>
            <person name="Xiong Y.L."/>
        </authorList>
    </citation>
    <scope>PROTEIN SEQUENCE</scope>
    <scope>FUNCTION</scope>
    <scope>SUBCELLULAR LOCATION</scope>
    <scope>SUBUNIT</scope>
    <scope>BIOPHYSICOCHEMICAL PROPERTIES</scope>
    <source>
        <tissue>Venom</tissue>
    </source>
</reference>
<reference key="2">
    <citation type="journal article" date="2002" name="Comp. Biochem. Physiol.">
        <title>Actions of two serine proteases from Trimeresurus jerdonii venom on chromogenic substrates and fibrinogen.</title>
        <authorList>
            <person name="Jin Y."/>
            <person name="Lu Q.M."/>
            <person name="Wang W.Y."/>
            <person name="Xiong Y.L."/>
        </authorList>
    </citation>
    <scope>BIOPHYSICOCHEMICAL PROPERTIES</scope>
</reference>
<comment type="function">
    <text evidence="3">Fibrin(ogen)olytic serine protease degrades Bbeta-chain of human fibrinogen (FGB) and shows a lower activity on Aa-chain (FGA). Also degrades fibrin directly. Releases fibrinopeptide B and a small amount of fibrinopeptide A. Has also be shown to catalyze the hydrolysis of some chromogenic substrates such as S2238, S2160, S2302 and S2251.</text>
</comment>
<comment type="activity regulation">
    <text evidence="3">Inhibited by PMSF and soybean trypsin inhibitor. Partially inhibited by DTT and cysteine. Not affected by EDTA.</text>
</comment>
<comment type="biophysicochemical properties">
    <kinetics>
        <KM evidence="3">12.8 uM for S-2160 (Bz-Ile-Glu-Gly-Arg-pNA)</KM>
        <KM evidence="3 4">27 uM for S-2302 (H-D-Pro-Phe-Arg-pNA)</KM>
        <KM evidence="3 4">46.7 uM for S-2238 (H-D-Phe-Pip-Arg-pNA)</KM>
        <KM evidence="3 4">399.2 uM for S-2251 (H-D-Val-Leu-Lys-pNA)</KM>
    </kinetics>
</comment>
<comment type="subunit">
    <text evidence="3">Monomer.</text>
</comment>
<comment type="subcellular location">
    <subcellularLocation>
        <location evidence="3">Secreted</location>
    </subcellularLocation>
</comment>
<comment type="tissue specificity">
    <text evidence="5">Expressed by the venom gland.</text>
</comment>
<comment type="miscellaneous">
    <text evidence="3 4">Negative results: does not show coagulant activity. Does not show activity on gamma-chain of fibrinogen (PubMed:11306131, PubMed:12091097). Does not activate Lys-plasminogen. Does not show hemorrhagic activity. Neither causes rabbit platelet aggregation nor inhibits platelet aggregation induced by ADP and collagen (PubMed:11306131).</text>
</comment>
<comment type="miscellaneous">
    <text evidence="3 4">Its molecular weight is estimated to be 32000.</text>
</comment>
<comment type="similarity">
    <text evidence="2">Belongs to the peptidase S1 family. Snake venom subfamily.</text>
</comment>
<sequence>VIGGDECNINEHPFLVLVYY</sequence>
<name>VSPJF_PROJR</name>
<dbReference type="EC" id="3.4.21.-"/>
<dbReference type="SABIO-RK" id="P0DMU1"/>
<dbReference type="GO" id="GO:0005576">
    <property type="term" value="C:extracellular region"/>
    <property type="evidence" value="ECO:0007669"/>
    <property type="project" value="UniProtKB-SubCell"/>
</dbReference>
<dbReference type="GO" id="GO:0008236">
    <property type="term" value="F:serine-type peptidase activity"/>
    <property type="evidence" value="ECO:0007669"/>
    <property type="project" value="UniProtKB-KW"/>
</dbReference>
<dbReference type="GO" id="GO:0090729">
    <property type="term" value="F:toxin activity"/>
    <property type="evidence" value="ECO:0007669"/>
    <property type="project" value="UniProtKB-KW"/>
</dbReference>
<dbReference type="GO" id="GO:0006508">
    <property type="term" value="P:proteolysis"/>
    <property type="evidence" value="ECO:0007669"/>
    <property type="project" value="UniProtKB-KW"/>
</dbReference>
<feature type="chain" id="PRO_0000432790" description="Beta-fibrinogenase jerdofibrase">
    <location>
        <begin position="1"/>
        <end position="20" status="greater than"/>
    </location>
</feature>
<feature type="domain" description="Peptidase S1" evidence="2">
    <location>
        <begin position="1"/>
        <end position="20" status="greater than"/>
    </location>
</feature>
<feature type="disulfide bond" evidence="1">
    <location>
        <begin position="7"/>
        <end status="unknown"/>
    </location>
</feature>
<feature type="non-terminal residue">
    <location>
        <position position="20"/>
    </location>
</feature>
<proteinExistence type="evidence at protein level"/>
<keyword id="KW-0903">Direct protein sequencing</keyword>
<keyword id="KW-1015">Disulfide bond</keyword>
<keyword id="KW-1206">Fibrinogenolytic toxin</keyword>
<keyword id="KW-1205">Fibrinolytic toxin</keyword>
<keyword id="KW-1199">Hemostasis impairing toxin</keyword>
<keyword id="KW-0378">Hydrolase</keyword>
<keyword id="KW-0645">Protease</keyword>
<keyword id="KW-0964">Secreted</keyword>
<keyword id="KW-0720">Serine protease</keyword>
<keyword id="KW-0800">Toxin</keyword>
<organism>
    <name type="scientific">Protobothrops jerdonii</name>
    <name type="common">Jerdon's pitviper</name>
    <name type="synonym">Trimeresurus jerdonii</name>
    <dbReference type="NCBI Taxonomy" id="242841"/>
    <lineage>
        <taxon>Eukaryota</taxon>
        <taxon>Metazoa</taxon>
        <taxon>Chordata</taxon>
        <taxon>Craniata</taxon>
        <taxon>Vertebrata</taxon>
        <taxon>Euteleostomi</taxon>
        <taxon>Lepidosauria</taxon>
        <taxon>Squamata</taxon>
        <taxon>Bifurcata</taxon>
        <taxon>Unidentata</taxon>
        <taxon>Episquamata</taxon>
        <taxon>Toxicofera</taxon>
        <taxon>Serpentes</taxon>
        <taxon>Colubroidea</taxon>
        <taxon>Viperidae</taxon>
        <taxon>Crotalinae</taxon>
        <taxon>Protobothrops</taxon>
    </lineage>
</organism>
<accession>P0DMU1</accession>
<evidence type="ECO:0000250" key="1">
    <source>
        <dbReference type="UniProtKB" id="Q91507"/>
    </source>
</evidence>
<evidence type="ECO:0000255" key="2">
    <source>
        <dbReference type="PROSITE-ProRule" id="PRU00274"/>
    </source>
</evidence>
<evidence type="ECO:0000269" key="3">
    <source>
    </source>
</evidence>
<evidence type="ECO:0000269" key="4">
    <source>
    </source>
</evidence>
<evidence type="ECO:0000305" key="5"/>